<proteinExistence type="inferred from homology"/>
<name>PCKA_PSEE4</name>
<gene>
    <name evidence="1" type="primary">pckA</name>
    <name type="ordered locus">PSEEN0234</name>
</gene>
<feature type="chain" id="PRO_1000026339" description="Phosphoenolpyruvate carboxykinase (ATP)">
    <location>
        <begin position="1"/>
        <end position="513"/>
    </location>
</feature>
<feature type="binding site" evidence="1">
    <location>
        <position position="45"/>
    </location>
    <ligand>
        <name>substrate</name>
    </ligand>
</feature>
<feature type="binding site" evidence="1">
    <location>
        <position position="179"/>
    </location>
    <ligand>
        <name>substrate</name>
    </ligand>
</feature>
<feature type="binding site" evidence="1">
    <location>
        <position position="185"/>
    </location>
    <ligand>
        <name>ATP</name>
        <dbReference type="ChEBI" id="CHEBI:30616"/>
    </ligand>
</feature>
<feature type="binding site" evidence="1">
    <location>
        <position position="185"/>
    </location>
    <ligand>
        <name>Mn(2+)</name>
        <dbReference type="ChEBI" id="CHEBI:29035"/>
    </ligand>
</feature>
<feature type="binding site" evidence="1">
    <location>
        <position position="185"/>
    </location>
    <ligand>
        <name>substrate</name>
    </ligand>
</feature>
<feature type="binding site" evidence="1">
    <location>
        <position position="204"/>
    </location>
    <ligand>
        <name>ATP</name>
        <dbReference type="ChEBI" id="CHEBI:30616"/>
    </ligand>
</feature>
<feature type="binding site" evidence="1">
    <location>
        <position position="204"/>
    </location>
    <ligand>
        <name>Mn(2+)</name>
        <dbReference type="ChEBI" id="CHEBI:29035"/>
    </ligand>
</feature>
<feature type="binding site" evidence="1">
    <location>
        <begin position="220"/>
        <end position="228"/>
    </location>
    <ligand>
        <name>ATP</name>
        <dbReference type="ChEBI" id="CHEBI:30616"/>
    </ligand>
</feature>
<feature type="binding site" evidence="1">
    <location>
        <position position="241"/>
    </location>
    <ligand>
        <name>Mn(2+)</name>
        <dbReference type="ChEBI" id="CHEBI:29035"/>
    </ligand>
</feature>
<feature type="binding site" evidence="1">
    <location>
        <position position="269"/>
    </location>
    <ligand>
        <name>ATP</name>
        <dbReference type="ChEBI" id="CHEBI:30616"/>
    </ligand>
</feature>
<feature type="binding site" evidence="1">
    <location>
        <position position="305"/>
    </location>
    <ligand>
        <name>ATP</name>
        <dbReference type="ChEBI" id="CHEBI:30616"/>
    </ligand>
</feature>
<feature type="binding site" evidence="1">
    <location>
        <position position="305"/>
    </location>
    <ligand>
        <name>substrate</name>
    </ligand>
</feature>
<feature type="binding site" evidence="1">
    <location>
        <position position="431"/>
    </location>
    <ligand>
        <name>ATP</name>
        <dbReference type="ChEBI" id="CHEBI:30616"/>
    </ligand>
</feature>
<protein>
    <recommendedName>
        <fullName evidence="1">Phosphoenolpyruvate carboxykinase (ATP)</fullName>
        <shortName evidence="1">PCK</shortName>
        <shortName evidence="1">PEP carboxykinase</shortName>
        <shortName evidence="1">PEPCK</shortName>
        <ecNumber evidence="1">4.1.1.49</ecNumber>
    </recommendedName>
</protein>
<reference key="1">
    <citation type="journal article" date="2006" name="Nat. Biotechnol.">
        <title>Complete genome sequence of the entomopathogenic and metabolically versatile soil bacterium Pseudomonas entomophila.</title>
        <authorList>
            <person name="Vodovar N."/>
            <person name="Vallenet D."/>
            <person name="Cruveiller S."/>
            <person name="Rouy Z."/>
            <person name="Barbe V."/>
            <person name="Acosta C."/>
            <person name="Cattolico L."/>
            <person name="Jubin C."/>
            <person name="Lajus A."/>
            <person name="Segurens B."/>
            <person name="Vacherie B."/>
            <person name="Wincker P."/>
            <person name="Weissenbach J."/>
            <person name="Lemaitre B."/>
            <person name="Medigue C."/>
            <person name="Boccard F."/>
        </authorList>
    </citation>
    <scope>NUCLEOTIDE SEQUENCE [LARGE SCALE GENOMIC DNA]</scope>
    <source>
        <strain>L48</strain>
    </source>
</reference>
<dbReference type="EC" id="4.1.1.49" evidence="1"/>
<dbReference type="EMBL" id="CT573326">
    <property type="protein sequence ID" value="CAK13201.1"/>
    <property type="molecule type" value="Genomic_DNA"/>
</dbReference>
<dbReference type="RefSeq" id="WP_011531661.1">
    <property type="nucleotide sequence ID" value="NC_008027.1"/>
</dbReference>
<dbReference type="SMR" id="Q1IGK1"/>
<dbReference type="STRING" id="384676.PSEEN0234"/>
<dbReference type="GeneID" id="32803581"/>
<dbReference type="KEGG" id="pen:PSEEN0234"/>
<dbReference type="eggNOG" id="COG1866">
    <property type="taxonomic scope" value="Bacteria"/>
</dbReference>
<dbReference type="HOGENOM" id="CLU_018247_0_1_6"/>
<dbReference type="OrthoDB" id="9806325at2"/>
<dbReference type="UniPathway" id="UPA00138"/>
<dbReference type="Proteomes" id="UP000000658">
    <property type="component" value="Chromosome"/>
</dbReference>
<dbReference type="GO" id="GO:0005829">
    <property type="term" value="C:cytosol"/>
    <property type="evidence" value="ECO:0007669"/>
    <property type="project" value="TreeGrafter"/>
</dbReference>
<dbReference type="GO" id="GO:0005524">
    <property type="term" value="F:ATP binding"/>
    <property type="evidence" value="ECO:0007669"/>
    <property type="project" value="UniProtKB-UniRule"/>
</dbReference>
<dbReference type="GO" id="GO:0046872">
    <property type="term" value="F:metal ion binding"/>
    <property type="evidence" value="ECO:0007669"/>
    <property type="project" value="UniProtKB-KW"/>
</dbReference>
<dbReference type="GO" id="GO:0004612">
    <property type="term" value="F:phosphoenolpyruvate carboxykinase (ATP) activity"/>
    <property type="evidence" value="ECO:0007669"/>
    <property type="project" value="UniProtKB-UniRule"/>
</dbReference>
<dbReference type="GO" id="GO:0006094">
    <property type="term" value="P:gluconeogenesis"/>
    <property type="evidence" value="ECO:0007669"/>
    <property type="project" value="UniProtKB-UniRule"/>
</dbReference>
<dbReference type="Gene3D" id="3.90.228.20">
    <property type="match status" value="1"/>
</dbReference>
<dbReference type="Gene3D" id="3.40.449.10">
    <property type="entry name" value="Phosphoenolpyruvate Carboxykinase, domain 1"/>
    <property type="match status" value="1"/>
</dbReference>
<dbReference type="Gene3D" id="2.170.8.10">
    <property type="entry name" value="Phosphoenolpyruvate Carboxykinase, domain 2"/>
    <property type="match status" value="1"/>
</dbReference>
<dbReference type="HAMAP" id="MF_00453">
    <property type="entry name" value="PEPCK_ATP"/>
    <property type="match status" value="1"/>
</dbReference>
<dbReference type="InterPro" id="IPR001272">
    <property type="entry name" value="PEP_carboxykinase_ATP"/>
</dbReference>
<dbReference type="InterPro" id="IPR013035">
    <property type="entry name" value="PEP_carboxykinase_C"/>
</dbReference>
<dbReference type="InterPro" id="IPR008210">
    <property type="entry name" value="PEP_carboxykinase_N"/>
</dbReference>
<dbReference type="InterPro" id="IPR015994">
    <property type="entry name" value="PEPCK_ATP_CS"/>
</dbReference>
<dbReference type="NCBIfam" id="TIGR00224">
    <property type="entry name" value="pckA"/>
    <property type="match status" value="1"/>
</dbReference>
<dbReference type="NCBIfam" id="NF006820">
    <property type="entry name" value="PRK09344.1-2"/>
    <property type="match status" value="1"/>
</dbReference>
<dbReference type="NCBIfam" id="NF006821">
    <property type="entry name" value="PRK09344.1-3"/>
    <property type="match status" value="1"/>
</dbReference>
<dbReference type="NCBIfam" id="NF006823">
    <property type="entry name" value="PRK09344.1-5"/>
    <property type="match status" value="1"/>
</dbReference>
<dbReference type="PANTHER" id="PTHR30031:SF0">
    <property type="entry name" value="PHOSPHOENOLPYRUVATE CARBOXYKINASE (ATP)"/>
    <property type="match status" value="1"/>
</dbReference>
<dbReference type="PANTHER" id="PTHR30031">
    <property type="entry name" value="PHOSPHOENOLPYRUVATE CARBOXYKINASE ATP"/>
    <property type="match status" value="1"/>
</dbReference>
<dbReference type="Pfam" id="PF01293">
    <property type="entry name" value="PEPCK_ATP"/>
    <property type="match status" value="1"/>
</dbReference>
<dbReference type="PIRSF" id="PIRSF006294">
    <property type="entry name" value="PEP_crbxkin"/>
    <property type="match status" value="1"/>
</dbReference>
<dbReference type="SUPFAM" id="SSF68923">
    <property type="entry name" value="PEP carboxykinase N-terminal domain"/>
    <property type="match status" value="1"/>
</dbReference>
<dbReference type="SUPFAM" id="SSF53795">
    <property type="entry name" value="PEP carboxykinase-like"/>
    <property type="match status" value="1"/>
</dbReference>
<dbReference type="PROSITE" id="PS00532">
    <property type="entry name" value="PEPCK_ATP"/>
    <property type="match status" value="1"/>
</dbReference>
<accession>Q1IGK1</accession>
<organism>
    <name type="scientific">Pseudomonas entomophila (strain L48)</name>
    <dbReference type="NCBI Taxonomy" id="384676"/>
    <lineage>
        <taxon>Bacteria</taxon>
        <taxon>Pseudomonadati</taxon>
        <taxon>Pseudomonadota</taxon>
        <taxon>Gammaproteobacteria</taxon>
        <taxon>Pseudomonadales</taxon>
        <taxon>Pseudomonadaceae</taxon>
        <taxon>Pseudomonas</taxon>
    </lineage>
</organism>
<keyword id="KW-0067">ATP-binding</keyword>
<keyword id="KW-0963">Cytoplasm</keyword>
<keyword id="KW-0210">Decarboxylase</keyword>
<keyword id="KW-0312">Gluconeogenesis</keyword>
<keyword id="KW-0456">Lyase</keyword>
<keyword id="KW-0464">Manganese</keyword>
<keyword id="KW-0479">Metal-binding</keyword>
<keyword id="KW-0547">Nucleotide-binding</keyword>
<sequence>MTQANNTVYTDLSVDDLVKEALQRGEGVLADTGALVVETGHRTGRSPADRFIVDEPSTSAAIAWGPINRKFPADKFDALWDRVEAFNNAQDHFVSYVHVGAAEEHYLPVKMTTQTAWQNLFGRCLFINPAQYNPAGRDEWQVLNVANFECVPERDGTNSDGCVIINFAQKKVLIAGMRYAGEMKKAMFSVQNFLLPAADVLPMHCAANIGEAGDVTLFFGLSGTGKTTLSADESRYLIGDDEHGWGEGVVFNIEGGCYAKCIDLSEKNEPVIWKAIKHGAVLENVVLDGNQHADYADVSLTQNSRAAYPLEHVAKRSEKNLGGEPNAVIFLTCDLTGVLPPVSILNNEQAAYHFLSGYTALVGSTEMGSGGGIKSTFSTCFGAPFFPRPAGEYAELLIKRIKGFDSKVYLVNTGWTGGGYGVGKRFSIPTTRGVIAAIQSGALIGAETEHLDIINLDVPKAVPSVETELLNPRNTWADKAAYDTAAKGLAGLFIENFKKFDVSDAIKAAGPQL</sequence>
<comment type="function">
    <text evidence="1">Involved in the gluconeogenesis. Catalyzes the conversion of oxaloacetate (OAA) to phosphoenolpyruvate (PEP) through direct phosphoryl transfer between the nucleoside triphosphate and OAA.</text>
</comment>
<comment type="catalytic activity">
    <reaction evidence="1">
        <text>oxaloacetate + ATP = phosphoenolpyruvate + ADP + CO2</text>
        <dbReference type="Rhea" id="RHEA:18617"/>
        <dbReference type="ChEBI" id="CHEBI:16452"/>
        <dbReference type="ChEBI" id="CHEBI:16526"/>
        <dbReference type="ChEBI" id="CHEBI:30616"/>
        <dbReference type="ChEBI" id="CHEBI:58702"/>
        <dbReference type="ChEBI" id="CHEBI:456216"/>
        <dbReference type="EC" id="4.1.1.49"/>
    </reaction>
</comment>
<comment type="cofactor">
    <cofactor evidence="1">
        <name>Mn(2+)</name>
        <dbReference type="ChEBI" id="CHEBI:29035"/>
    </cofactor>
    <text evidence="1">Binds 1 Mn(2+) ion per subunit.</text>
</comment>
<comment type="pathway">
    <text evidence="1">Carbohydrate biosynthesis; gluconeogenesis.</text>
</comment>
<comment type="subunit">
    <text evidence="1">Monomer.</text>
</comment>
<comment type="subcellular location">
    <subcellularLocation>
        <location evidence="1">Cytoplasm</location>
    </subcellularLocation>
</comment>
<comment type="similarity">
    <text evidence="1">Belongs to the phosphoenolpyruvate carboxykinase (ATP) family.</text>
</comment>
<evidence type="ECO:0000255" key="1">
    <source>
        <dbReference type="HAMAP-Rule" id="MF_00453"/>
    </source>
</evidence>